<protein>
    <recommendedName>
        <fullName evidence="1">Ribosome-recycling factor</fullName>
        <shortName evidence="1">RRF</shortName>
    </recommendedName>
    <alternativeName>
        <fullName evidence="1">Ribosome-releasing factor</fullName>
    </alternativeName>
</protein>
<organism>
    <name type="scientific">Chlorobaculum parvum (strain DSM 263 / NCIMB 8327)</name>
    <name type="common">Chlorobium vibrioforme subsp. thiosulfatophilum</name>
    <dbReference type="NCBI Taxonomy" id="517417"/>
    <lineage>
        <taxon>Bacteria</taxon>
        <taxon>Pseudomonadati</taxon>
        <taxon>Chlorobiota</taxon>
        <taxon>Chlorobiia</taxon>
        <taxon>Chlorobiales</taxon>
        <taxon>Chlorobiaceae</taxon>
        <taxon>Chlorobaculum</taxon>
    </lineage>
</organism>
<accession>B3QL17</accession>
<dbReference type="EMBL" id="CP001099">
    <property type="protein sequence ID" value="ACF10805.1"/>
    <property type="molecule type" value="Genomic_DNA"/>
</dbReference>
<dbReference type="RefSeq" id="WP_012501638.1">
    <property type="nucleotide sequence ID" value="NC_011027.1"/>
</dbReference>
<dbReference type="SMR" id="B3QL17"/>
<dbReference type="STRING" id="517417.Cpar_0382"/>
<dbReference type="KEGG" id="cpc:Cpar_0382"/>
<dbReference type="eggNOG" id="COG0233">
    <property type="taxonomic scope" value="Bacteria"/>
</dbReference>
<dbReference type="HOGENOM" id="CLU_073981_2_0_10"/>
<dbReference type="OrthoDB" id="9804006at2"/>
<dbReference type="Proteomes" id="UP000008811">
    <property type="component" value="Chromosome"/>
</dbReference>
<dbReference type="GO" id="GO:0005829">
    <property type="term" value="C:cytosol"/>
    <property type="evidence" value="ECO:0007669"/>
    <property type="project" value="GOC"/>
</dbReference>
<dbReference type="GO" id="GO:0043023">
    <property type="term" value="F:ribosomal large subunit binding"/>
    <property type="evidence" value="ECO:0007669"/>
    <property type="project" value="TreeGrafter"/>
</dbReference>
<dbReference type="GO" id="GO:0002184">
    <property type="term" value="P:cytoplasmic translational termination"/>
    <property type="evidence" value="ECO:0007669"/>
    <property type="project" value="TreeGrafter"/>
</dbReference>
<dbReference type="CDD" id="cd00520">
    <property type="entry name" value="RRF"/>
    <property type="match status" value="1"/>
</dbReference>
<dbReference type="FunFam" id="1.10.132.20:FF:000001">
    <property type="entry name" value="Ribosome-recycling factor"/>
    <property type="match status" value="1"/>
</dbReference>
<dbReference type="FunFam" id="3.30.1360.40:FF:000001">
    <property type="entry name" value="Ribosome-recycling factor"/>
    <property type="match status" value="1"/>
</dbReference>
<dbReference type="Gene3D" id="3.30.1360.40">
    <property type="match status" value="1"/>
</dbReference>
<dbReference type="Gene3D" id="1.10.132.20">
    <property type="entry name" value="Ribosome-recycling factor"/>
    <property type="match status" value="1"/>
</dbReference>
<dbReference type="HAMAP" id="MF_00040">
    <property type="entry name" value="RRF"/>
    <property type="match status" value="1"/>
</dbReference>
<dbReference type="InterPro" id="IPR002661">
    <property type="entry name" value="Ribosome_recyc_fac"/>
</dbReference>
<dbReference type="InterPro" id="IPR023584">
    <property type="entry name" value="Ribosome_recyc_fac_dom"/>
</dbReference>
<dbReference type="InterPro" id="IPR036191">
    <property type="entry name" value="RRF_sf"/>
</dbReference>
<dbReference type="NCBIfam" id="TIGR00496">
    <property type="entry name" value="frr"/>
    <property type="match status" value="1"/>
</dbReference>
<dbReference type="PANTHER" id="PTHR20982:SF3">
    <property type="entry name" value="MITOCHONDRIAL RIBOSOME RECYCLING FACTOR PSEUDO 1"/>
    <property type="match status" value="1"/>
</dbReference>
<dbReference type="PANTHER" id="PTHR20982">
    <property type="entry name" value="RIBOSOME RECYCLING FACTOR"/>
    <property type="match status" value="1"/>
</dbReference>
<dbReference type="Pfam" id="PF01765">
    <property type="entry name" value="RRF"/>
    <property type="match status" value="1"/>
</dbReference>
<dbReference type="SUPFAM" id="SSF55194">
    <property type="entry name" value="Ribosome recycling factor, RRF"/>
    <property type="match status" value="1"/>
</dbReference>
<evidence type="ECO:0000255" key="1">
    <source>
        <dbReference type="HAMAP-Rule" id="MF_00040"/>
    </source>
</evidence>
<gene>
    <name evidence="1" type="primary">frr</name>
    <name type="ordered locus">Cpar_0382</name>
</gene>
<comment type="function">
    <text evidence="1">Responsible for the release of ribosomes from messenger RNA at the termination of protein biosynthesis. May increase the efficiency of translation by recycling ribosomes from one round of translation to another.</text>
</comment>
<comment type="subcellular location">
    <subcellularLocation>
        <location evidence="1">Cytoplasm</location>
    </subcellularLocation>
</comment>
<comment type="similarity">
    <text evidence="1">Belongs to the RRF family.</text>
</comment>
<name>RRF_CHLP8</name>
<reference key="1">
    <citation type="submission" date="2008-06" db="EMBL/GenBank/DDBJ databases">
        <title>Complete sequence of Chlorobaculum parvum NCIB 8327.</title>
        <authorList>
            <consortium name="US DOE Joint Genome Institute"/>
            <person name="Lucas S."/>
            <person name="Copeland A."/>
            <person name="Lapidus A."/>
            <person name="Glavina del Rio T."/>
            <person name="Dalin E."/>
            <person name="Tice H."/>
            <person name="Bruce D."/>
            <person name="Goodwin L."/>
            <person name="Pitluck S."/>
            <person name="Schmutz J."/>
            <person name="Larimer F."/>
            <person name="Land M."/>
            <person name="Hauser L."/>
            <person name="Kyrpides N."/>
            <person name="Mikhailova N."/>
            <person name="Zhao F."/>
            <person name="Li T."/>
            <person name="Liu Z."/>
            <person name="Overmann J."/>
            <person name="Bryant D.A."/>
            <person name="Richardson P."/>
        </authorList>
    </citation>
    <scope>NUCLEOTIDE SEQUENCE [LARGE SCALE GENOMIC DNA]</scope>
    <source>
        <strain>DSM 263 / NCIMB 8327</strain>
    </source>
</reference>
<sequence length="186" mass="21224">MTVRDVIQKIEPRMKKTIEAFQHEIASIRTGKATTALLDRVKVEAYGSQMPLKQVGNVGVLDVHTLSVQVWDKSMVGAVERAIRDANLGLNPSADGQTVRISIPPLTEERRKEYVKLTKKFGEDSKVSLRNHRRDLIHELDKLEKEKAISEDDKNHGKKEADDLVHKYEKKITEMIAQKEKEIMEV</sequence>
<keyword id="KW-0963">Cytoplasm</keyword>
<keyword id="KW-0648">Protein biosynthesis</keyword>
<feature type="chain" id="PRO_1000090722" description="Ribosome-recycling factor">
    <location>
        <begin position="1"/>
        <end position="186"/>
    </location>
</feature>
<proteinExistence type="inferred from homology"/>